<reference key="1">
    <citation type="journal article" date="2006" name="Proc. Natl. Acad. Sci. U.S.A.">
        <title>Comparative genomics of the lactic acid bacteria.</title>
        <authorList>
            <person name="Makarova K.S."/>
            <person name="Slesarev A."/>
            <person name="Wolf Y.I."/>
            <person name="Sorokin A."/>
            <person name="Mirkin B."/>
            <person name="Koonin E.V."/>
            <person name="Pavlov A."/>
            <person name="Pavlova N."/>
            <person name="Karamychev V."/>
            <person name="Polouchine N."/>
            <person name="Shakhova V."/>
            <person name="Grigoriev I."/>
            <person name="Lou Y."/>
            <person name="Rohksar D."/>
            <person name="Lucas S."/>
            <person name="Huang K."/>
            <person name="Goodstein D.M."/>
            <person name="Hawkins T."/>
            <person name="Plengvidhya V."/>
            <person name="Welker D."/>
            <person name="Hughes J."/>
            <person name="Goh Y."/>
            <person name="Benson A."/>
            <person name="Baldwin K."/>
            <person name="Lee J.-H."/>
            <person name="Diaz-Muniz I."/>
            <person name="Dosti B."/>
            <person name="Smeianov V."/>
            <person name="Wechter W."/>
            <person name="Barabote R."/>
            <person name="Lorca G."/>
            <person name="Altermann E."/>
            <person name="Barrangou R."/>
            <person name="Ganesan B."/>
            <person name="Xie Y."/>
            <person name="Rawsthorne H."/>
            <person name="Tamir D."/>
            <person name="Parker C."/>
            <person name="Breidt F."/>
            <person name="Broadbent J.R."/>
            <person name="Hutkins R."/>
            <person name="O'Sullivan D."/>
            <person name="Steele J."/>
            <person name="Unlu G."/>
            <person name="Saier M.H. Jr."/>
            <person name="Klaenhammer T."/>
            <person name="Richardson P."/>
            <person name="Kozyavkin S."/>
            <person name="Weimer B.C."/>
            <person name="Mills D.A."/>
        </authorList>
    </citation>
    <scope>NUCLEOTIDE SEQUENCE [LARGE SCALE GENOMIC DNA]</scope>
    <source>
        <strain>ATCC BAA-365 / Lb-18</strain>
    </source>
</reference>
<protein>
    <recommendedName>
        <fullName evidence="1">Chaperonin GroEL</fullName>
        <ecNumber evidence="1">5.6.1.7</ecNumber>
    </recommendedName>
    <alternativeName>
        <fullName evidence="1">60 kDa chaperonin</fullName>
    </alternativeName>
    <alternativeName>
        <fullName evidence="1">Chaperonin-60</fullName>
        <shortName evidence="1">Cpn60</shortName>
    </alternativeName>
</protein>
<comment type="function">
    <text evidence="1">Together with its co-chaperonin GroES, plays an essential role in assisting protein folding. The GroEL-GroES system forms a nano-cage that allows encapsulation of the non-native substrate proteins and provides a physical environment optimized to promote and accelerate protein folding.</text>
</comment>
<comment type="catalytic activity">
    <reaction evidence="1">
        <text>ATP + H2O + a folded polypeptide = ADP + phosphate + an unfolded polypeptide.</text>
        <dbReference type="EC" id="5.6.1.7"/>
    </reaction>
</comment>
<comment type="subunit">
    <text evidence="1">Forms a cylinder of 14 subunits composed of two heptameric rings stacked back-to-back. Interacts with the co-chaperonin GroES.</text>
</comment>
<comment type="subcellular location">
    <subcellularLocation>
        <location evidence="1">Cytoplasm</location>
    </subcellularLocation>
</comment>
<comment type="similarity">
    <text evidence="1">Belongs to the chaperonin (HSP60) family.</text>
</comment>
<organism>
    <name type="scientific">Lactobacillus delbrueckii subsp. bulgaricus (strain ATCC BAA-365 / Lb-18)</name>
    <dbReference type="NCBI Taxonomy" id="321956"/>
    <lineage>
        <taxon>Bacteria</taxon>
        <taxon>Bacillati</taxon>
        <taxon>Bacillota</taxon>
        <taxon>Bacilli</taxon>
        <taxon>Lactobacillales</taxon>
        <taxon>Lactobacillaceae</taxon>
        <taxon>Lactobacillus</taxon>
    </lineage>
</organism>
<gene>
    <name evidence="1" type="primary">groEL</name>
    <name evidence="1" type="synonym">groL</name>
    <name type="ordered locus">LBUL_1496</name>
</gene>
<accession>Q048Y3</accession>
<feature type="chain" id="PRO_1000025799" description="Chaperonin GroEL">
    <location>
        <begin position="1"/>
        <end position="537"/>
    </location>
</feature>
<feature type="binding site" evidence="1">
    <location>
        <begin position="29"/>
        <end position="32"/>
    </location>
    <ligand>
        <name>ATP</name>
        <dbReference type="ChEBI" id="CHEBI:30616"/>
    </ligand>
</feature>
<feature type="binding site" evidence="1">
    <location>
        <begin position="86"/>
        <end position="90"/>
    </location>
    <ligand>
        <name>ATP</name>
        <dbReference type="ChEBI" id="CHEBI:30616"/>
    </ligand>
</feature>
<feature type="binding site" evidence="1">
    <location>
        <position position="413"/>
    </location>
    <ligand>
        <name>ATP</name>
        <dbReference type="ChEBI" id="CHEBI:30616"/>
    </ligand>
</feature>
<feature type="binding site" evidence="1">
    <location>
        <begin position="477"/>
        <end position="479"/>
    </location>
    <ligand>
        <name>ATP</name>
        <dbReference type="ChEBI" id="CHEBI:30616"/>
    </ligand>
</feature>
<feature type="binding site" evidence="1">
    <location>
        <position position="493"/>
    </location>
    <ligand>
        <name>ATP</name>
        <dbReference type="ChEBI" id="CHEBI:30616"/>
    </ligand>
</feature>
<keyword id="KW-0067">ATP-binding</keyword>
<keyword id="KW-0143">Chaperone</keyword>
<keyword id="KW-0963">Cytoplasm</keyword>
<keyword id="KW-0413">Isomerase</keyword>
<keyword id="KW-0547">Nucleotide-binding</keyword>
<sequence length="537" mass="57332">MAKDIKFSEDARRSLLNGVNKLANTVKTTLGPKGRNVVLEQSYGAPTITNDGVTIAKAIELEDHYENIGAKLVAEAASKTNDIAGDGTTTATVLTQAIVQEGMKNVVAGANPVGIRRGIEKATKAAVDQLHKNSHKVSSRDQIAQVASISSASKEIGDLIAEAMEKVGKDGVITIEDSRGIETELSVVEGMQFDRGYLSQYMVTDNDKMEADLENPYILITDKKISNIQDILPMLQEIVQQGRSLLIIADDVTGEALPTLVLNKIRGTFNVVAVKAPGFGDRRKEQLADIAALTGGTVISEDLGLELKDTQLSQLGQARRVTITKDSTTIVDGSGAKEAIQERVDTIRKQIEDTSSDFDKKKLQERLAKLTGGVAVIHVGAATETELKERRYRVEDALNATRAAVDEGYVAGGGTALVNVEEAVKATKGDTDDEQTGINIVARALTAPVRQIAENAGQEGSVVVDHLRKVDPEVGYNAAEDKYVNMIDEGIIDPTQVTRSALQNAASIAGLLLTTEAVVAEIPEDKPEAAPAQPGMM</sequence>
<dbReference type="EC" id="5.6.1.7" evidence="1"/>
<dbReference type="EMBL" id="CP000412">
    <property type="protein sequence ID" value="ABJ58989.1"/>
    <property type="molecule type" value="Genomic_DNA"/>
</dbReference>
<dbReference type="RefSeq" id="WP_003619546.1">
    <property type="nucleotide sequence ID" value="NC_008529.1"/>
</dbReference>
<dbReference type="SMR" id="Q048Y3"/>
<dbReference type="KEGG" id="lbu:LBUL_1496"/>
<dbReference type="HOGENOM" id="CLU_016503_3_0_9"/>
<dbReference type="BioCyc" id="LDEL321956:LBUL_RS07070-MONOMER"/>
<dbReference type="GO" id="GO:0005737">
    <property type="term" value="C:cytoplasm"/>
    <property type="evidence" value="ECO:0007669"/>
    <property type="project" value="UniProtKB-SubCell"/>
</dbReference>
<dbReference type="GO" id="GO:0005524">
    <property type="term" value="F:ATP binding"/>
    <property type="evidence" value="ECO:0007669"/>
    <property type="project" value="UniProtKB-UniRule"/>
</dbReference>
<dbReference type="GO" id="GO:0140662">
    <property type="term" value="F:ATP-dependent protein folding chaperone"/>
    <property type="evidence" value="ECO:0007669"/>
    <property type="project" value="InterPro"/>
</dbReference>
<dbReference type="GO" id="GO:0016853">
    <property type="term" value="F:isomerase activity"/>
    <property type="evidence" value="ECO:0007669"/>
    <property type="project" value="UniProtKB-KW"/>
</dbReference>
<dbReference type="GO" id="GO:0051082">
    <property type="term" value="F:unfolded protein binding"/>
    <property type="evidence" value="ECO:0007669"/>
    <property type="project" value="UniProtKB-UniRule"/>
</dbReference>
<dbReference type="GO" id="GO:0042026">
    <property type="term" value="P:protein refolding"/>
    <property type="evidence" value="ECO:0007669"/>
    <property type="project" value="UniProtKB-UniRule"/>
</dbReference>
<dbReference type="CDD" id="cd03344">
    <property type="entry name" value="GroEL"/>
    <property type="match status" value="1"/>
</dbReference>
<dbReference type="FunFam" id="3.50.7.10:FF:000001">
    <property type="entry name" value="60 kDa chaperonin"/>
    <property type="match status" value="1"/>
</dbReference>
<dbReference type="Gene3D" id="3.50.7.10">
    <property type="entry name" value="GroEL"/>
    <property type="match status" value="1"/>
</dbReference>
<dbReference type="Gene3D" id="1.10.560.10">
    <property type="entry name" value="GroEL-like equatorial domain"/>
    <property type="match status" value="1"/>
</dbReference>
<dbReference type="Gene3D" id="3.30.260.10">
    <property type="entry name" value="TCP-1-like chaperonin intermediate domain"/>
    <property type="match status" value="1"/>
</dbReference>
<dbReference type="HAMAP" id="MF_00600">
    <property type="entry name" value="CH60"/>
    <property type="match status" value="1"/>
</dbReference>
<dbReference type="InterPro" id="IPR018370">
    <property type="entry name" value="Chaperonin_Cpn60_CS"/>
</dbReference>
<dbReference type="InterPro" id="IPR001844">
    <property type="entry name" value="Cpn60/GroEL"/>
</dbReference>
<dbReference type="InterPro" id="IPR002423">
    <property type="entry name" value="Cpn60/GroEL/TCP-1"/>
</dbReference>
<dbReference type="InterPro" id="IPR027409">
    <property type="entry name" value="GroEL-like_apical_dom_sf"/>
</dbReference>
<dbReference type="InterPro" id="IPR027413">
    <property type="entry name" value="GROEL-like_equatorial_sf"/>
</dbReference>
<dbReference type="InterPro" id="IPR027410">
    <property type="entry name" value="TCP-1-like_intermed_sf"/>
</dbReference>
<dbReference type="NCBIfam" id="TIGR02348">
    <property type="entry name" value="GroEL"/>
    <property type="match status" value="1"/>
</dbReference>
<dbReference type="NCBIfam" id="NF000592">
    <property type="entry name" value="PRK00013.1"/>
    <property type="match status" value="1"/>
</dbReference>
<dbReference type="NCBIfam" id="NF009487">
    <property type="entry name" value="PRK12849.1"/>
    <property type="match status" value="1"/>
</dbReference>
<dbReference type="NCBIfam" id="NF009488">
    <property type="entry name" value="PRK12850.1"/>
    <property type="match status" value="1"/>
</dbReference>
<dbReference type="NCBIfam" id="NF009489">
    <property type="entry name" value="PRK12851.1"/>
    <property type="match status" value="1"/>
</dbReference>
<dbReference type="PANTHER" id="PTHR45633">
    <property type="entry name" value="60 KDA HEAT SHOCK PROTEIN, MITOCHONDRIAL"/>
    <property type="match status" value="1"/>
</dbReference>
<dbReference type="Pfam" id="PF00118">
    <property type="entry name" value="Cpn60_TCP1"/>
    <property type="match status" value="1"/>
</dbReference>
<dbReference type="PRINTS" id="PR00298">
    <property type="entry name" value="CHAPERONIN60"/>
</dbReference>
<dbReference type="SUPFAM" id="SSF52029">
    <property type="entry name" value="GroEL apical domain-like"/>
    <property type="match status" value="1"/>
</dbReference>
<dbReference type="SUPFAM" id="SSF48592">
    <property type="entry name" value="GroEL equatorial domain-like"/>
    <property type="match status" value="1"/>
</dbReference>
<dbReference type="SUPFAM" id="SSF54849">
    <property type="entry name" value="GroEL-intermediate domain like"/>
    <property type="match status" value="1"/>
</dbReference>
<dbReference type="PROSITE" id="PS00296">
    <property type="entry name" value="CHAPERONINS_CPN60"/>
    <property type="match status" value="1"/>
</dbReference>
<name>CH60_LACDB</name>
<evidence type="ECO:0000255" key="1">
    <source>
        <dbReference type="HAMAP-Rule" id="MF_00600"/>
    </source>
</evidence>
<proteinExistence type="inferred from homology"/>